<protein>
    <recommendedName>
        <fullName evidence="13">Versicolorin reductase 1</fullName>
        <shortName evidence="13">VER-1</shortName>
        <ecNumber evidence="16">1.1.-.-</ecNumber>
    </recommendedName>
    <alternativeName>
        <fullName evidence="11">Dothistromin biosynthesis protein A</fullName>
    </alternativeName>
</protein>
<name>VER1_DOTSE</name>
<organism>
    <name type="scientific">Dothistroma septosporum</name>
    <name type="common">Red band needle blight fungus</name>
    <name type="synonym">Mycosphaerella pini</name>
    <dbReference type="NCBI Taxonomy" id="64363"/>
    <lineage>
        <taxon>Eukaryota</taxon>
        <taxon>Fungi</taxon>
        <taxon>Dikarya</taxon>
        <taxon>Ascomycota</taxon>
        <taxon>Pezizomycotina</taxon>
        <taxon>Dothideomycetes</taxon>
        <taxon>Dothideomycetidae</taxon>
        <taxon>Mycosphaerellales</taxon>
        <taxon>Mycosphaerellaceae</taxon>
        <taxon>Dothistroma</taxon>
    </lineage>
</organism>
<gene>
    <name evidence="13" type="primary">ver1</name>
    <name evidence="11" type="synonym">dotA</name>
</gene>
<feature type="chain" id="PRO_0000443452" description="Versicolorin reductase 1">
    <location>
        <begin position="1"/>
        <end position="263"/>
    </location>
</feature>
<feature type="active site" description="Proton donor" evidence="2">
    <location>
        <position position="144"/>
    </location>
</feature>
<feature type="active site" description="Proton donor" evidence="2">
    <location>
        <position position="145"/>
    </location>
</feature>
<feature type="active site" description="Proton acceptor" evidence="4">
    <location>
        <position position="159"/>
    </location>
</feature>
<feature type="active site" description="Lowers pKa of active site Tyr" evidence="2">
    <location>
        <position position="163"/>
    </location>
</feature>
<feature type="binding site" evidence="1">
    <location>
        <position position="22"/>
    </location>
    <ligand>
        <name>NADP(+)</name>
        <dbReference type="ChEBI" id="CHEBI:58349"/>
    </ligand>
</feature>
<feature type="binding site" evidence="1">
    <location>
        <position position="68"/>
    </location>
    <ligand>
        <name>NADP(+)</name>
        <dbReference type="ChEBI" id="CHEBI:58349"/>
    </ligand>
</feature>
<feature type="binding site" evidence="2">
    <location>
        <position position="95"/>
    </location>
    <ligand>
        <name>NADP(+)</name>
        <dbReference type="ChEBI" id="CHEBI:58349"/>
    </ligand>
</feature>
<feature type="binding site" evidence="1">
    <location>
        <position position="128"/>
    </location>
    <ligand>
        <name>NADP(+)</name>
        <dbReference type="ChEBI" id="CHEBI:58349"/>
    </ligand>
</feature>
<feature type="binding site" evidence="2">
    <location>
        <position position="159"/>
    </location>
    <ligand>
        <name>NADP(+)</name>
        <dbReference type="ChEBI" id="CHEBI:58349"/>
    </ligand>
</feature>
<feature type="binding site" evidence="2">
    <location>
        <position position="163"/>
    </location>
    <ligand>
        <name>NADP(+)</name>
        <dbReference type="ChEBI" id="CHEBI:58349"/>
    </ligand>
</feature>
<feature type="binding site" evidence="2">
    <location>
        <position position="192"/>
    </location>
    <ligand>
        <name>NADP(+)</name>
        <dbReference type="ChEBI" id="CHEBI:58349"/>
    </ligand>
</feature>
<feature type="binding site" evidence="1">
    <location>
        <position position="194"/>
    </location>
    <ligand>
        <name>NADP(+)</name>
        <dbReference type="ChEBI" id="CHEBI:58349"/>
    </ligand>
</feature>
<accession>Q8TFD5</accession>
<proteinExistence type="evidence at transcript level"/>
<sequence length="263" mass="27777">MSVDNFRLDGKVALVTGSGRGIGAAIAIELGKRGANVVVNYSRAVAEANKVVETIIANGTKAIAIKADVGEIDQVAKMMDQAVEHFGQLDIVSSNAGLVSFGHLKDVTGDEFDRVFRVNTRGQFFVAREAYRHLSVGGRIILTSSNTASIKGVPKHAIYSGSKGAIDTFVRCMAIDAGDKKITVNAVAPGAIKTDMYAAVAREYIPGGDKFTDEQVDECAAWLSPLERVGLPADIGRVVCFLASDAAEWVSGKILGIDGGAFR</sequence>
<evidence type="ECO:0000250" key="1">
    <source>
        <dbReference type="UniProtKB" id="L0E2Z4"/>
    </source>
</evidence>
<evidence type="ECO:0000250" key="2">
    <source>
        <dbReference type="UniProtKB" id="O93868"/>
    </source>
</evidence>
<evidence type="ECO:0000250" key="3">
    <source>
        <dbReference type="UniProtKB" id="P50161"/>
    </source>
</evidence>
<evidence type="ECO:0000255" key="4">
    <source>
        <dbReference type="PROSITE-ProRule" id="PRU10001"/>
    </source>
</evidence>
<evidence type="ECO:0000269" key="5">
    <source>
    </source>
</evidence>
<evidence type="ECO:0000269" key="6">
    <source>
    </source>
</evidence>
<evidence type="ECO:0000269" key="7">
    <source>
    </source>
</evidence>
<evidence type="ECO:0000269" key="8">
    <source>
    </source>
</evidence>
<evidence type="ECO:0000269" key="9">
    <source>
    </source>
</evidence>
<evidence type="ECO:0000269" key="10">
    <source>
    </source>
</evidence>
<evidence type="ECO:0000303" key="11">
    <source>
    </source>
</evidence>
<evidence type="ECO:0000303" key="12">
    <source>
    </source>
</evidence>
<evidence type="ECO:0000303" key="13">
    <source>
    </source>
</evidence>
<evidence type="ECO:0000305" key="14"/>
<evidence type="ECO:0000305" key="15">
    <source>
    </source>
</evidence>
<evidence type="ECO:0000305" key="16">
    <source>
    </source>
</evidence>
<evidence type="ECO:0000305" key="17">
    <source>
    </source>
</evidence>
<reference key="1">
    <citation type="journal article" date="2002" name="Appl. Environ. Microbiol.">
        <title>Dothistroma pini, a forest pathogen, contains homologs of aflatoxin biosynthetic pathway genes.</title>
        <authorList>
            <person name="Bradshaw R.E."/>
            <person name="Bhatnagar D."/>
            <person name="Ganley R.J."/>
            <person name="Gillman C.J."/>
            <person name="Monahan B.J."/>
            <person name="Seconi J.M."/>
        </authorList>
    </citation>
    <scope>NUCLEOTIDE SEQUENCE [GENOMIC DNA]</scope>
    <scope>FUNCTION</scope>
    <scope>DISRUPTION PHENOTYPE</scope>
    <source>
        <strain>NZE1 / ATCC MYA-605</strain>
    </source>
</reference>
<reference key="2">
    <citation type="journal article" date="2007" name="Fungal Genet. Biol.">
        <title>A fragmented aflatoxin-like gene cluster in the forest pathogen Dothistroma septosporum.</title>
        <authorList>
            <person name="Zhang S."/>
            <person name="Schwelm A."/>
            <person name="Jin H."/>
            <person name="Collins L.J."/>
            <person name="Bradshaw R.E."/>
        </authorList>
    </citation>
    <scope>NUCLEOTIDE SEQUENCE [GENOMIC DNA]</scope>
    <scope>FUNCTION</scope>
    <scope>INDUCTION</scope>
    <source>
        <strain>NZE7</strain>
    </source>
</reference>
<reference key="3">
    <citation type="submission" date="2009-11" db="EMBL/GenBank/DDBJ databases">
        <authorList>
            <person name="Bradshaw R.E."/>
            <person name="Monahan B.J."/>
            <person name="Gillman C.J."/>
        </authorList>
    </citation>
    <scope>NUCLEOTIDE SEQUENCE [GENOMIC DNA]</scope>
    <source>
        <strain>NZE1 / ATCC MYA-605</strain>
    </source>
</reference>
<reference key="4">
    <citation type="journal article" date="2006" name="Mycopathologia">
        <title>A polyketide synthase gene required for biosynthesis of the aflatoxin-like toxin, dothistromin.</title>
        <authorList>
            <person name="Bradshaw R.E."/>
            <person name="Jin H."/>
            <person name="Morgan B.S."/>
            <person name="Schwelm A."/>
            <person name="Teddy O.R."/>
            <person name="Young C.A."/>
            <person name="Zhang S."/>
        </authorList>
    </citation>
    <scope>FUNCTION</scope>
</reference>
<reference key="5">
    <citation type="journal article" date="2008" name="Mycol. Res.">
        <title>Early expression of aflatoxin-like dothistromin genes in the forest pathogen Dothistroma septosporum.</title>
        <authorList>
            <person name="Schwelm A."/>
            <person name="Barron N.J."/>
            <person name="Zhang S."/>
            <person name="Bradshaw R.E."/>
        </authorList>
    </citation>
    <scope>INDUCTION</scope>
</reference>
<reference key="6">
    <citation type="journal article" date="2009" name="Toxins">
        <title>Functional analysis of a putative dothistromin toxin MFS transporter gene.</title>
        <authorList>
            <person name="Bradshaw R.E."/>
            <person name="Feng Z."/>
            <person name="Schwelm A."/>
            <person name="Yang Y."/>
            <person name="Zhang S."/>
        </authorList>
    </citation>
    <scope>SUBCELLULAR LOCATION</scope>
</reference>
<reference key="7">
    <citation type="journal article" date="2010" name="Toxins">
        <title>Genetics of dothistromin biosynthesis of Dothistroma septosporum: an update.</title>
        <authorList>
            <person name="Schwelm A."/>
            <person name="Bradshaw R.E."/>
        </authorList>
    </citation>
    <scope>REVIEW ON FUNCTION</scope>
    <scope>PATHWAY</scope>
</reference>
<reference key="8">
    <citation type="journal article" date="2013" name="Fungal Genet. Biol.">
        <title>Dothistromin genes at multiple separate loci are regulated by AflR.</title>
        <authorList>
            <person name="Chettri P."/>
            <person name="Ehrlich K.C."/>
            <person name="Cary J.W."/>
            <person name="Collemare J."/>
            <person name="Cox M.P."/>
            <person name="Griffiths S.A."/>
            <person name="Olson M.A."/>
            <person name="de Wit P.J."/>
            <person name="Bradshaw R.E."/>
        </authorList>
    </citation>
    <scope>FUNCTION</scope>
    <scope>INDUCTION</scope>
    <scope>PATHWAY</scope>
</reference>
<reference key="9">
    <citation type="journal article" date="2013" name="New Phytol.">
        <title>Fragmentation of an aflatoxin-like gene cluster in a forest pathogen.</title>
        <authorList>
            <person name="Bradshaw R.E."/>
            <person name="Slot J.C."/>
            <person name="Moore G.G."/>
            <person name="Chettri P."/>
            <person name="de Wit P.J."/>
            <person name="Ehrlich K.C."/>
            <person name="Ganley A.R."/>
            <person name="Olson M.A."/>
            <person name="Rokas A."/>
            <person name="Carbone I."/>
            <person name="Cox M.P."/>
        </authorList>
    </citation>
    <scope>FUNCTION</scope>
</reference>
<reference key="10">
    <citation type="journal article" date="2015" name="Fungal Biol.">
        <title>Regulation of the aflatoxin-like toxin dothistromin by AflJ.</title>
        <authorList>
            <person name="Chettri P."/>
            <person name="Ehrlich K.C."/>
            <person name="Bradshaw R.E."/>
        </authorList>
    </citation>
    <scope>INDUCTION</scope>
</reference>
<comment type="function">
    <text evidence="3 5 6 12 15 16 17">Versicolorin reductase; part of the fragmented gene cluster that mediates the biosynthesis of dothistromin (DOTH), a polyketide toxin very similar in structure to the aflatoxin precursor, versicolorin B (PubMed:12039746, PubMed:17683963, PubMed:22069571, PubMed:23207690, PubMed:23448391). The first step of the pathway is the conversion of acetate to norsolorinic acid (NOR) and requires the fatty acid synthase subunits hexA and hexB, as well as the polyketide synthase pksA (PubMed:16649078, PubMed:23207690). PksA combines a hexanoyl starter unit and 7 malonyl-CoA extender units to synthesize the precursor NOR (By similarity). The hexanoyl starter unit is provided to the acyl-carrier protein (ACP) domain by the fungal fatty acid synthase hexA/hexB (By similarity). The second step is the conversion of NOR to averantin (AVN) and requires the norsolorinic acid ketoreductase nor1, which catalyzes the dehydration of norsolorinic acid to form (1'S)-averantin (PubMed:23207690). The cytochrome P450 monooxygenase avnA then catalyzes the hydroxylation of AVN to 5'hydroxyaverantin (HAVN) (PubMed:23207690). The next step is performed by adhA that transforms HAVN to averufin (AVF) (PubMed:23207690). Averufin might then be converted to hydroxyversicolorone by cypX and avfA (PubMed:23207690). Hydroxyversicolorone is further converted versiconal hemiacetal acetate (VHA) by moxY (PubMed:23207690). VHA is then the substrate for the versiconal hemiacetal acetate esterase est1 to yield versiconal (VAL) (PubMed:23207690). Versicolorin B synthase vbsA then converts VAL to versicolorin B (VERB) by closing the bisfuran ring (PubMed:16649078, PubMed:23207690). Then, the activity of the versicolorin B desaturase verB leads to versicolorin A (VERA) (PubMed:23207690). DotB, a predicted chloroperoxidase, may perform epoxidation of the A-ring of VERA (PubMed:23207690). Alternatively, a cytochrome P450, such as cypX or avnA could catalyze this step (PubMed:23207690). It is also possible that another, uncharacterized, cytochrome P450 enzyme is responsible for this step (PubMed:23207690). Opening of the epoxide could potentially be achieved by the epoxide hydrolase epoA (PubMed:23207690). However, epoA seems not to be required for DOTH biosynthesis, but other epoxide hydrolases may have the ability to complement this hydrolysis (PubMed:23207690). Alternatively, opening of the epoxide ring could be achieved non-enzymatically (PubMed:23207690). The next step is the deoxygenation of ring A to yield the 5,8-dihydroxyanthraquinone which is most likely catalyzed by the NADPH dehydrogenase encoded by ver1 (PubMed:23207690). The last stages of DOTH biosynthesis are proposed to involve hydroxylation of the bisfuran (PubMed:23207690). OrdB and norB might have oxidative roles here (PubMed:23207690). An alternative possibility is that cytochrome P450 monoogenases such as avnA and cypX might perform these steps in addition to previously proposed steps (PubMed:23207690).</text>
</comment>
<comment type="pathway">
    <text evidence="12 16">Mycotoxin biosynthesis.</text>
</comment>
<comment type="subcellular location">
    <subcellularLocation>
        <location evidence="3">Cytoplasm</location>
        <location evidence="3">Cytosol</location>
    </subcellularLocation>
</comment>
<comment type="induction">
    <text evidence="7 8 9 10">Expression is positively regulated by the dothistromin-specific transcription factors aflR and aflJ (PubMed:23207690, PubMed:25986547). Dothistromin biosynthetic proteins are co-regulated, showing a high level of expression at ealy exponential phase with a subsequent decline in older cultures (PubMed:17683963, PubMed:18262779).</text>
</comment>
<comment type="disruption phenotype">
    <text evidence="5">Blocks the production of dothistromin and accumulates versicolorin A (PubMed:12039746).</text>
</comment>
<comment type="similarity">
    <text evidence="14">Belongs to the short-chain dehydrogenases/reductases (SDR) family.</text>
</comment>
<dbReference type="EC" id="1.1.-.-" evidence="16"/>
<dbReference type="EMBL" id="AF448056">
    <property type="protein sequence ID" value="AAL87045.1"/>
    <property type="molecule type" value="Genomic_DNA"/>
</dbReference>
<dbReference type="SMR" id="Q8TFD5"/>
<dbReference type="OMA" id="IDWDQNV"/>
<dbReference type="GO" id="GO:0005829">
    <property type="term" value="C:cytosol"/>
    <property type="evidence" value="ECO:0007669"/>
    <property type="project" value="UniProtKB-SubCell"/>
</dbReference>
<dbReference type="GO" id="GO:0016614">
    <property type="term" value="F:oxidoreductase activity, acting on CH-OH group of donors"/>
    <property type="evidence" value="ECO:0007669"/>
    <property type="project" value="UniProtKB-ARBA"/>
</dbReference>
<dbReference type="FunFam" id="3.40.50.720:FF:000084">
    <property type="entry name" value="Short-chain dehydrogenase reductase"/>
    <property type="match status" value="1"/>
</dbReference>
<dbReference type="Gene3D" id="3.40.50.720">
    <property type="entry name" value="NAD(P)-binding Rossmann-like Domain"/>
    <property type="match status" value="1"/>
</dbReference>
<dbReference type="InterPro" id="IPR036291">
    <property type="entry name" value="NAD(P)-bd_dom_sf"/>
</dbReference>
<dbReference type="InterPro" id="IPR020904">
    <property type="entry name" value="Sc_DH/Rdtase_CS"/>
</dbReference>
<dbReference type="InterPro" id="IPR002347">
    <property type="entry name" value="SDR_fam"/>
</dbReference>
<dbReference type="PANTHER" id="PTHR48107">
    <property type="entry name" value="NADPH-DEPENDENT ALDEHYDE REDUCTASE-LIKE PROTEIN, CHLOROPLASTIC-RELATED"/>
    <property type="match status" value="1"/>
</dbReference>
<dbReference type="PANTHER" id="PTHR48107:SF7">
    <property type="entry name" value="RE15974P"/>
    <property type="match status" value="1"/>
</dbReference>
<dbReference type="Pfam" id="PF13561">
    <property type="entry name" value="adh_short_C2"/>
    <property type="match status" value="1"/>
</dbReference>
<dbReference type="PRINTS" id="PR00081">
    <property type="entry name" value="GDHRDH"/>
</dbReference>
<dbReference type="PRINTS" id="PR00080">
    <property type="entry name" value="SDRFAMILY"/>
</dbReference>
<dbReference type="SUPFAM" id="SSF51735">
    <property type="entry name" value="NAD(P)-binding Rossmann-fold domains"/>
    <property type="match status" value="1"/>
</dbReference>
<dbReference type="PROSITE" id="PS00061">
    <property type="entry name" value="ADH_SHORT"/>
    <property type="match status" value="1"/>
</dbReference>
<keyword id="KW-0963">Cytoplasm</keyword>
<keyword id="KW-0521">NADP</keyword>
<keyword id="KW-0560">Oxidoreductase</keyword>